<dbReference type="EC" id="2.7.11.18"/>
<dbReference type="EMBL" id="AAFI02000070">
    <property type="protein sequence ID" value="EAL65100.1"/>
    <property type="molecule type" value="Genomic_DNA"/>
</dbReference>
<dbReference type="RefSeq" id="XP_638461.1">
    <property type="nucleotide sequence ID" value="XM_633369.1"/>
</dbReference>
<dbReference type="SMR" id="Q54PB4"/>
<dbReference type="PaxDb" id="44689-DDB0216385"/>
<dbReference type="EnsemblProtists" id="EAL65100">
    <property type="protein sequence ID" value="EAL65100"/>
    <property type="gene ID" value="DDB_G0284661"/>
</dbReference>
<dbReference type="GeneID" id="8624712"/>
<dbReference type="KEGG" id="ddi:DDB_G0284661"/>
<dbReference type="dictyBase" id="DDB_G0284661"/>
<dbReference type="VEuPathDB" id="AmoebaDB:DDB_G0284661"/>
<dbReference type="eggNOG" id="KOG0032">
    <property type="taxonomic scope" value="Eukaryota"/>
</dbReference>
<dbReference type="HOGENOM" id="CLU_000288_63_0_1"/>
<dbReference type="InParanoid" id="Q54PB4"/>
<dbReference type="OMA" id="FGRPPFY"/>
<dbReference type="PhylomeDB" id="Q54PB4"/>
<dbReference type="PRO" id="PR:Q54PB4"/>
<dbReference type="Proteomes" id="UP000002195">
    <property type="component" value="Chromosome 4"/>
</dbReference>
<dbReference type="GO" id="GO:0005737">
    <property type="term" value="C:cytoplasm"/>
    <property type="evidence" value="ECO:0000318"/>
    <property type="project" value="GO_Central"/>
</dbReference>
<dbReference type="GO" id="GO:0005524">
    <property type="term" value="F:ATP binding"/>
    <property type="evidence" value="ECO:0007669"/>
    <property type="project" value="UniProtKB-KW"/>
</dbReference>
<dbReference type="GO" id="GO:0004687">
    <property type="term" value="F:myosin light chain kinase activity"/>
    <property type="evidence" value="ECO:0007669"/>
    <property type="project" value="UniProtKB-EC"/>
</dbReference>
<dbReference type="GO" id="GO:0004674">
    <property type="term" value="F:protein serine/threonine kinase activity"/>
    <property type="evidence" value="ECO:0000318"/>
    <property type="project" value="GO_Central"/>
</dbReference>
<dbReference type="GO" id="GO:0006468">
    <property type="term" value="P:protein phosphorylation"/>
    <property type="evidence" value="ECO:0000250"/>
    <property type="project" value="dictyBase"/>
</dbReference>
<dbReference type="GO" id="GO:0007165">
    <property type="term" value="P:signal transduction"/>
    <property type="evidence" value="ECO:0000318"/>
    <property type="project" value="GO_Central"/>
</dbReference>
<dbReference type="CDD" id="cd05117">
    <property type="entry name" value="STKc_CAMK"/>
    <property type="match status" value="1"/>
</dbReference>
<dbReference type="FunFam" id="3.30.200.20:FF:000042">
    <property type="entry name" value="Aurora kinase A"/>
    <property type="match status" value="1"/>
</dbReference>
<dbReference type="FunFam" id="1.10.510.10:FF:001553">
    <property type="entry name" value="Serine/threonine-protein kinase zyg-8"/>
    <property type="match status" value="1"/>
</dbReference>
<dbReference type="Gene3D" id="1.10.510.10">
    <property type="entry name" value="Transferase(Phosphotransferase) domain 1"/>
    <property type="match status" value="1"/>
</dbReference>
<dbReference type="InterPro" id="IPR030616">
    <property type="entry name" value="Aur-like"/>
</dbReference>
<dbReference type="InterPro" id="IPR011009">
    <property type="entry name" value="Kinase-like_dom_sf"/>
</dbReference>
<dbReference type="InterPro" id="IPR000719">
    <property type="entry name" value="Prot_kinase_dom"/>
</dbReference>
<dbReference type="InterPro" id="IPR017441">
    <property type="entry name" value="Protein_kinase_ATP_BS"/>
</dbReference>
<dbReference type="InterPro" id="IPR008271">
    <property type="entry name" value="Ser/Thr_kinase_AS"/>
</dbReference>
<dbReference type="PANTHER" id="PTHR24350">
    <property type="entry name" value="SERINE/THREONINE-PROTEIN KINASE IAL-RELATED"/>
    <property type="match status" value="1"/>
</dbReference>
<dbReference type="Pfam" id="PF00069">
    <property type="entry name" value="Pkinase"/>
    <property type="match status" value="1"/>
</dbReference>
<dbReference type="SMART" id="SM00220">
    <property type="entry name" value="S_TKc"/>
    <property type="match status" value="1"/>
</dbReference>
<dbReference type="SUPFAM" id="SSF56112">
    <property type="entry name" value="Protein kinase-like (PK-like)"/>
    <property type="match status" value="1"/>
</dbReference>
<dbReference type="PROSITE" id="PS00107">
    <property type="entry name" value="PROTEIN_KINASE_ATP"/>
    <property type="match status" value="1"/>
</dbReference>
<dbReference type="PROSITE" id="PS50011">
    <property type="entry name" value="PROTEIN_KINASE_DOM"/>
    <property type="match status" value="1"/>
</dbReference>
<dbReference type="PROSITE" id="PS00108">
    <property type="entry name" value="PROTEIN_KINASE_ST"/>
    <property type="match status" value="1"/>
</dbReference>
<evidence type="ECO:0000255" key="1">
    <source>
        <dbReference type="PROSITE-ProRule" id="PRU00159"/>
    </source>
</evidence>
<evidence type="ECO:0000255" key="2">
    <source>
        <dbReference type="PROSITE-ProRule" id="PRU10027"/>
    </source>
</evidence>
<evidence type="ECO:0000256" key="3">
    <source>
        <dbReference type="SAM" id="MobiDB-lite"/>
    </source>
</evidence>
<evidence type="ECO:0000305" key="4"/>
<organism>
    <name type="scientific">Dictyostelium discoideum</name>
    <name type="common">Social amoeba</name>
    <dbReference type="NCBI Taxonomy" id="44689"/>
    <lineage>
        <taxon>Eukaryota</taxon>
        <taxon>Amoebozoa</taxon>
        <taxon>Evosea</taxon>
        <taxon>Eumycetozoa</taxon>
        <taxon>Dictyostelia</taxon>
        <taxon>Dictyosteliales</taxon>
        <taxon>Dictyosteliaceae</taxon>
        <taxon>Dictyostelium</taxon>
    </lineage>
</organism>
<sequence length="481" mass="55127">MPSNPNRSIYDFYNITDIIGEGTFSTVTLANHIEKIEDKYAIKIISKEVLDNERRTYVDWEISILSKCQHPNIIKFYEHYESDEDICLVLEWIPNGDLFDRIVKKGVFNEEEARLTMKSLLSAVEYLHDKSVVHRDIKPENILFSDSYGGIKLGDFGLAKFYEESIGLELACGTLAYSAPEITNNQVYRKSVDMWSCGCILYFILFGRPPFYSDDESEMFELITKGQWEFPSKTQHKYSDQVKDLIKLLLENDPNKRLTVKQSLAHKWIQSIDERSFSSVIKQSPLITSQQQQQQSPSSLLSSSSSSTASSPSLKPLSPLVAIIEQQEYNYNHQQLQNHNILHSSNSHSRHHHASSANSTTVDQQQEEDNNHHYHRHNSNNNINNNNDNNDNNNSNSNNSNNNINNFINNNNNNNNNNSNFFDDDDEIDINQNEMDDIDDEQQQPTNSLRSSSKPIAIKKSQIRTSLNGNIDIKRGVLTPL</sequence>
<gene>
    <name type="ORF">DDB_G0284661</name>
</gene>
<feature type="chain" id="PRO_0000367464" description="Probable myosin light chain kinase DDB_G0284661">
    <location>
        <begin position="1"/>
        <end position="481"/>
    </location>
</feature>
<feature type="domain" description="Protein kinase" evidence="1">
    <location>
        <begin position="13"/>
        <end position="269"/>
    </location>
</feature>
<feature type="region of interest" description="Disordered" evidence="3">
    <location>
        <begin position="285"/>
        <end position="315"/>
    </location>
</feature>
<feature type="region of interest" description="Disordered" evidence="3">
    <location>
        <begin position="345"/>
        <end position="427"/>
    </location>
</feature>
<feature type="compositionally biased region" description="Low complexity" evidence="3">
    <location>
        <begin position="379"/>
        <end position="421"/>
    </location>
</feature>
<feature type="active site" description="Proton acceptor" evidence="1 2">
    <location>
        <position position="136"/>
    </location>
</feature>
<feature type="binding site" evidence="1">
    <location>
        <begin position="19"/>
        <end position="27"/>
    </location>
    <ligand>
        <name>ATP</name>
        <dbReference type="ChEBI" id="CHEBI:30616"/>
    </ligand>
</feature>
<feature type="binding site" evidence="1">
    <location>
        <position position="43"/>
    </location>
    <ligand>
        <name>ATP</name>
        <dbReference type="ChEBI" id="CHEBI:30616"/>
    </ligand>
</feature>
<keyword id="KW-0067">ATP-binding</keyword>
<keyword id="KW-0418">Kinase</keyword>
<keyword id="KW-0547">Nucleotide-binding</keyword>
<keyword id="KW-1185">Reference proteome</keyword>
<keyword id="KW-0723">Serine/threonine-protein kinase</keyword>
<keyword id="KW-0808">Transferase</keyword>
<proteinExistence type="inferred from homology"/>
<comment type="function">
    <text>May phosphorylate a specific serine in the N-terminus of a myosin light chain.</text>
</comment>
<comment type="catalytic activity">
    <reaction>
        <text>L-seryl-[myosin light chain] + ATP = O-phospho-L-seryl-[myosin light chain] + ADP + H(+)</text>
        <dbReference type="Rhea" id="RHEA:22004"/>
        <dbReference type="Rhea" id="RHEA-COMP:13684"/>
        <dbReference type="Rhea" id="RHEA-COMP:13685"/>
        <dbReference type="ChEBI" id="CHEBI:15378"/>
        <dbReference type="ChEBI" id="CHEBI:29999"/>
        <dbReference type="ChEBI" id="CHEBI:30616"/>
        <dbReference type="ChEBI" id="CHEBI:83421"/>
        <dbReference type="ChEBI" id="CHEBI:456216"/>
        <dbReference type="EC" id="2.7.11.18"/>
    </reaction>
</comment>
<comment type="catalytic activity">
    <reaction>
        <text>L-threonyl-[myosin light chain] + ATP = O-phospho-L-threonyl-[myosin light chain] + ADP + H(+)</text>
        <dbReference type="Rhea" id="RHEA:53900"/>
        <dbReference type="Rhea" id="RHEA-COMP:13686"/>
        <dbReference type="Rhea" id="RHEA-COMP:13687"/>
        <dbReference type="ChEBI" id="CHEBI:15378"/>
        <dbReference type="ChEBI" id="CHEBI:30013"/>
        <dbReference type="ChEBI" id="CHEBI:30616"/>
        <dbReference type="ChEBI" id="CHEBI:61977"/>
        <dbReference type="ChEBI" id="CHEBI:456216"/>
        <dbReference type="EC" id="2.7.11.18"/>
    </reaction>
</comment>
<comment type="activity regulation">
    <text>Does not have a calmodulin-binding domain.</text>
</comment>
<comment type="similarity">
    <text evidence="4">Belongs to the protein kinase superfamily. CAMK Ser/Thr protein kinase family. CaMK subfamily.</text>
</comment>
<protein>
    <recommendedName>
        <fullName>Probable myosin light chain kinase DDB_G0284661</fullName>
        <ecNumber>2.7.11.18</ecNumber>
    </recommendedName>
</protein>
<name>MYLKE_DICDI</name>
<reference key="1">
    <citation type="journal article" date="2005" name="Nature">
        <title>The genome of the social amoeba Dictyostelium discoideum.</title>
        <authorList>
            <person name="Eichinger L."/>
            <person name="Pachebat J.A."/>
            <person name="Gloeckner G."/>
            <person name="Rajandream M.A."/>
            <person name="Sucgang R."/>
            <person name="Berriman M."/>
            <person name="Song J."/>
            <person name="Olsen R."/>
            <person name="Szafranski K."/>
            <person name="Xu Q."/>
            <person name="Tunggal B."/>
            <person name="Kummerfeld S."/>
            <person name="Madera M."/>
            <person name="Konfortov B.A."/>
            <person name="Rivero F."/>
            <person name="Bankier A.T."/>
            <person name="Lehmann R."/>
            <person name="Hamlin N."/>
            <person name="Davies R."/>
            <person name="Gaudet P."/>
            <person name="Fey P."/>
            <person name="Pilcher K."/>
            <person name="Chen G."/>
            <person name="Saunders D."/>
            <person name="Sodergren E.J."/>
            <person name="Davis P."/>
            <person name="Kerhornou A."/>
            <person name="Nie X."/>
            <person name="Hall N."/>
            <person name="Anjard C."/>
            <person name="Hemphill L."/>
            <person name="Bason N."/>
            <person name="Farbrother P."/>
            <person name="Desany B."/>
            <person name="Just E."/>
            <person name="Morio T."/>
            <person name="Rost R."/>
            <person name="Churcher C.M."/>
            <person name="Cooper J."/>
            <person name="Haydock S."/>
            <person name="van Driessche N."/>
            <person name="Cronin A."/>
            <person name="Goodhead I."/>
            <person name="Muzny D.M."/>
            <person name="Mourier T."/>
            <person name="Pain A."/>
            <person name="Lu M."/>
            <person name="Harper D."/>
            <person name="Lindsay R."/>
            <person name="Hauser H."/>
            <person name="James K.D."/>
            <person name="Quiles M."/>
            <person name="Madan Babu M."/>
            <person name="Saito T."/>
            <person name="Buchrieser C."/>
            <person name="Wardroper A."/>
            <person name="Felder M."/>
            <person name="Thangavelu M."/>
            <person name="Johnson D."/>
            <person name="Knights A."/>
            <person name="Loulseged H."/>
            <person name="Mungall K.L."/>
            <person name="Oliver K."/>
            <person name="Price C."/>
            <person name="Quail M.A."/>
            <person name="Urushihara H."/>
            <person name="Hernandez J."/>
            <person name="Rabbinowitsch E."/>
            <person name="Steffen D."/>
            <person name="Sanders M."/>
            <person name="Ma J."/>
            <person name="Kohara Y."/>
            <person name="Sharp S."/>
            <person name="Simmonds M.N."/>
            <person name="Spiegler S."/>
            <person name="Tivey A."/>
            <person name="Sugano S."/>
            <person name="White B."/>
            <person name="Walker D."/>
            <person name="Woodward J.R."/>
            <person name="Winckler T."/>
            <person name="Tanaka Y."/>
            <person name="Shaulsky G."/>
            <person name="Schleicher M."/>
            <person name="Weinstock G.M."/>
            <person name="Rosenthal A."/>
            <person name="Cox E.C."/>
            <person name="Chisholm R.L."/>
            <person name="Gibbs R.A."/>
            <person name="Loomis W.F."/>
            <person name="Platzer M."/>
            <person name="Kay R.R."/>
            <person name="Williams J.G."/>
            <person name="Dear P.H."/>
            <person name="Noegel A.A."/>
            <person name="Barrell B.G."/>
            <person name="Kuspa A."/>
        </authorList>
    </citation>
    <scope>NUCLEOTIDE SEQUENCE [LARGE SCALE GENOMIC DNA]</scope>
    <source>
        <strain>AX4</strain>
    </source>
</reference>
<accession>Q54PB4</accession>